<comment type="function">
    <text evidence="4">Catalyzes the conversion of 3-hydroxyindolin-2-one to 2-hydroxy-1,4-benzoxazin-3-one (HBOA).</text>
</comment>
<comment type="catalytic activity">
    <reaction evidence="3 4">
        <text>3-hydroxyindolin-2-one + reduced [NADPH--hemoprotein reductase] + O2 = 2-hydroxy-2H-1,4-benzoxazin-3(4H)-one + oxidized [NADPH--hemoprotein reductase] + H2O + H(+)</text>
        <dbReference type="Rhea" id="RHEA:31927"/>
        <dbReference type="Rhea" id="RHEA-COMP:11964"/>
        <dbReference type="Rhea" id="RHEA-COMP:11965"/>
        <dbReference type="ChEBI" id="CHEBI:15377"/>
        <dbReference type="ChEBI" id="CHEBI:15378"/>
        <dbReference type="ChEBI" id="CHEBI:15379"/>
        <dbReference type="ChEBI" id="CHEBI:28536"/>
        <dbReference type="ChEBI" id="CHEBI:57618"/>
        <dbReference type="ChEBI" id="CHEBI:58210"/>
        <dbReference type="ChEBI" id="CHEBI:63559"/>
        <dbReference type="EC" id="1.14.14.109"/>
    </reaction>
</comment>
<comment type="cofactor">
    <cofactor evidence="1">
        <name>heme</name>
        <dbReference type="ChEBI" id="CHEBI:30413"/>
    </cofactor>
</comment>
<comment type="pathway">
    <text>Secondary metabolite biosynthesis; 2,4-dihydroxy-1,4-benzoxazin-3-one biosynthesis; 2,4-dihydroxy-1,4-benzoxazin-3-one from indoleglycerol phosphate: step 4/5.</text>
</comment>
<comment type="subcellular location">
    <subcellularLocation>
        <location evidence="5">Membrane</location>
        <topology evidence="5">Multi-pass membrane protein</topology>
    </subcellularLocation>
</comment>
<comment type="similarity">
    <text evidence="5">Belongs to the cytochrome P450 family.</text>
</comment>
<organism>
    <name type="scientific">Zea mays</name>
    <name type="common">Maize</name>
    <dbReference type="NCBI Taxonomy" id="4577"/>
    <lineage>
        <taxon>Eukaryota</taxon>
        <taxon>Viridiplantae</taxon>
        <taxon>Streptophyta</taxon>
        <taxon>Embryophyta</taxon>
        <taxon>Tracheophyta</taxon>
        <taxon>Spermatophyta</taxon>
        <taxon>Magnoliopsida</taxon>
        <taxon>Liliopsida</taxon>
        <taxon>Poales</taxon>
        <taxon>Poaceae</taxon>
        <taxon>PACMAD clade</taxon>
        <taxon>Panicoideae</taxon>
        <taxon>Andropogonodae</taxon>
        <taxon>Andropogoneae</taxon>
        <taxon>Tripsacinae</taxon>
        <taxon>Zea</taxon>
    </lineage>
</organism>
<accession>Q43250</accession>
<accession>Q43254</accession>
<name>C71C1_MAIZE</name>
<reference key="1">
    <citation type="journal article" date="1995" name="Mol. Gen. Genet.">
        <title>Expression of a cytochrome P450 gene family in maize.</title>
        <authorList>
            <person name="Frey M."/>
            <person name="Kliem R."/>
            <person name="Saedler H."/>
            <person name="Gierl A."/>
        </authorList>
    </citation>
    <scope>NUCLEOTIDE SEQUENCE [GENOMIC DNA / MRNA]</scope>
    <source>
        <strain>cv. CI31A</strain>
    </source>
</reference>
<reference key="2">
    <citation type="journal article" date="1997" name="Science">
        <title>Analysis of a chemical plant defense mechanism in grasses.</title>
        <authorList>
            <person name="Frey M."/>
            <person name="Chomet P."/>
            <person name="Glawischnig E."/>
            <person name="Stettner C."/>
            <person name="Grun S."/>
            <person name="Winklmair A."/>
            <person name="Eisenreich W."/>
            <person name="Bacher A."/>
            <person name="Meeley R.B."/>
            <person name="Briggs S.P."/>
            <person name="Simcox K."/>
            <person name="Gierl A."/>
        </authorList>
    </citation>
    <scope>FUNCTION</scope>
    <scope>CATALYTIC ACTIVITY</scope>
</reference>
<reference key="3">
    <citation type="journal article" date="2001" name="Phytochemistry">
        <title>Studies on the biosynthesis of 2-hydroxy-1,4-benzoxazin-3-one (HBOA) from 3-hydroxyindolin-2-one in Zea mays.</title>
        <authorList>
            <person name="Spiteller P."/>
            <person name="Glawischnig E."/>
            <person name="Gierl A."/>
            <person name="Steglich W."/>
        </authorList>
    </citation>
    <scope>CATALYTIC ACTIVITY</scope>
    <scope>REACTION MECHANISM</scope>
</reference>
<sequence>MALEAGYDYLHVAVVQCTPTQAAAVLGVLLLLAIRLAAAARSSSATSPKWKQHRLPPTPPGKLPIIGHLHLIGSHPHVSFRDLHAKYGHNGLMLVQVGAVPTIVVSTPQAAEAVLRTHDHVLASRPRNPVADIIRYNSTDVAFAPYGVYWRTARKVVNTHLLSAKMVFSKRREREEEVRLVVARIRDAAEASPGTALDMTELLGGYASDFVCRAVLGESHRKQGRNKLFRELTETSAALLGGFNVEDYFPKLADVDLFLRIICAKAKSVSKRWDSLFNELLSEYALSGGKQGDHNSEDFVHLLLSLQKDYGLTTDNIKGILVNMFEAAIETSFLVLEYSMSELMNNRHVLAKLQKEVRTATPDGRMVMEEDLSRMPYLKATIKESMRIHPPAPFLLPHFSTHDCEINGYTIPAGTRVIVNAWALARDPTCWDKAEEFFPERFLEQGRDAEVDMYGKDIRFVPFGAGRRICAGATFAIATVEIMLANLIYHFDWEMPAEMERTGAKVDMSDQFGMTLRRTQKLYLVPRIPKCVSSS</sequence>
<proteinExistence type="evidence at protein level"/>
<protein>
    <recommendedName>
        <fullName>3-hydroxyindolin-2-one monooxygenase</fullName>
        <ecNumber evidence="3 4">1.14.14.109</ecNumber>
    </recommendedName>
    <alternativeName>
        <fullName>Cytochrome P450 71C1</fullName>
    </alternativeName>
    <alternativeName>
        <fullName>Protein benzoxazineless 4</fullName>
    </alternativeName>
</protein>
<evidence type="ECO:0000250" key="1"/>
<evidence type="ECO:0000255" key="2"/>
<evidence type="ECO:0000269" key="3">
    <source>
    </source>
</evidence>
<evidence type="ECO:0000269" key="4">
    <source>
    </source>
</evidence>
<evidence type="ECO:0000305" key="5"/>
<gene>
    <name type="primary">CYP71C1</name>
    <name type="synonym">BX4</name>
</gene>
<feature type="chain" id="PRO_0000052113" description="3-hydroxyindolin-2-one monooxygenase">
    <location>
        <begin position="1"/>
        <end position="535"/>
    </location>
</feature>
<feature type="transmembrane region" description="Helical" evidence="2">
    <location>
        <begin position="14"/>
        <end position="34"/>
    </location>
</feature>
<feature type="transmembrane region" description="Helical" evidence="2">
    <location>
        <begin position="469"/>
        <end position="489"/>
    </location>
</feature>
<feature type="binding site" description="axial binding residue" evidence="1">
    <location>
        <position position="470"/>
    </location>
    <ligand>
        <name>heme</name>
        <dbReference type="ChEBI" id="CHEBI:30413"/>
    </ligand>
    <ligandPart>
        <name>Fe</name>
        <dbReference type="ChEBI" id="CHEBI:18248"/>
    </ligandPart>
</feature>
<feature type="sequence conflict" description="In Ref. 1; CAA57421." evidence="5" ref="1">
    <original>G</original>
    <variation>A</variation>
    <location>
        <position position="6"/>
    </location>
</feature>
<feature type="sequence conflict" description="In Ref. 1; CAA57421." evidence="5" ref="1">
    <original>S</original>
    <variation>C</variation>
    <location>
        <position position="138"/>
    </location>
</feature>
<feature type="sequence conflict" description="In Ref. 1; CAA57421." evidence="5" ref="1">
    <original>V</original>
    <variation>E</variation>
    <location>
        <position position="148"/>
    </location>
</feature>
<feature type="sequence conflict" description="In Ref. 1; CAA57421." evidence="5" ref="1">
    <original>S</original>
    <variation>G</variation>
    <location>
        <position position="268"/>
    </location>
</feature>
<dbReference type="EC" id="1.14.14.109" evidence="3 4"/>
<dbReference type="EMBL" id="X81828">
    <property type="protein sequence ID" value="CAA57422.1"/>
    <property type="molecule type" value="Genomic_DNA"/>
</dbReference>
<dbReference type="EMBL" id="X81827">
    <property type="protein sequence ID" value="CAA57421.1"/>
    <property type="molecule type" value="mRNA"/>
</dbReference>
<dbReference type="PIR" id="T03258">
    <property type="entry name" value="T03258"/>
</dbReference>
<dbReference type="SMR" id="Q43250"/>
<dbReference type="STRING" id="4577.Q43250"/>
<dbReference type="PaxDb" id="4577-GRMZM2G172491_P01"/>
<dbReference type="KEGG" id="ag:CAA57422"/>
<dbReference type="MaizeGDB" id="114044"/>
<dbReference type="eggNOG" id="KOG0156">
    <property type="taxonomic scope" value="Eukaryota"/>
</dbReference>
<dbReference type="InParanoid" id="Q43250"/>
<dbReference type="BioCyc" id="MetaCyc:MONOMER-10171"/>
<dbReference type="BRENDA" id="1.14.14.109">
    <property type="organism ID" value="6752"/>
</dbReference>
<dbReference type="UniPathway" id="UPA00872">
    <property type="reaction ID" value="UER00850"/>
</dbReference>
<dbReference type="Proteomes" id="UP000007305">
    <property type="component" value="Unplaced"/>
</dbReference>
<dbReference type="ExpressionAtlas" id="Q43250">
    <property type="expression patterns" value="differential"/>
</dbReference>
<dbReference type="GO" id="GO:0016020">
    <property type="term" value="C:membrane"/>
    <property type="evidence" value="ECO:0000318"/>
    <property type="project" value="GO_Central"/>
</dbReference>
<dbReference type="GO" id="GO:0036192">
    <property type="term" value="F:3-hydroxyindolin-2-one monooxygenase activity"/>
    <property type="evidence" value="ECO:0007669"/>
    <property type="project" value="UniProtKB-EC"/>
</dbReference>
<dbReference type="GO" id="GO:0020037">
    <property type="term" value="F:heme binding"/>
    <property type="evidence" value="ECO:0007669"/>
    <property type="project" value="InterPro"/>
</dbReference>
<dbReference type="GO" id="GO:0005506">
    <property type="term" value="F:iron ion binding"/>
    <property type="evidence" value="ECO:0007669"/>
    <property type="project" value="InterPro"/>
</dbReference>
<dbReference type="GO" id="GO:0016709">
    <property type="term" value="F:oxidoreductase activity, acting on paired donors, with incorporation or reduction of molecular oxygen, NAD(P)H as one donor, and incorporation of one atom of oxygen"/>
    <property type="evidence" value="ECO:0000318"/>
    <property type="project" value="GO_Central"/>
</dbReference>
<dbReference type="CDD" id="cd11072">
    <property type="entry name" value="CYP71-like"/>
    <property type="match status" value="1"/>
</dbReference>
<dbReference type="FunFam" id="1.10.630.10:FF:000055">
    <property type="entry name" value="Cytochrome P450 71A26"/>
    <property type="match status" value="1"/>
</dbReference>
<dbReference type="Gene3D" id="1.10.630.10">
    <property type="entry name" value="Cytochrome P450"/>
    <property type="match status" value="1"/>
</dbReference>
<dbReference type="InterPro" id="IPR001128">
    <property type="entry name" value="Cyt_P450"/>
</dbReference>
<dbReference type="InterPro" id="IPR017972">
    <property type="entry name" value="Cyt_P450_CS"/>
</dbReference>
<dbReference type="InterPro" id="IPR002401">
    <property type="entry name" value="Cyt_P450_E_grp-I"/>
</dbReference>
<dbReference type="InterPro" id="IPR036396">
    <property type="entry name" value="Cyt_P450_sf"/>
</dbReference>
<dbReference type="PANTHER" id="PTHR47955">
    <property type="entry name" value="CYTOCHROME P450 FAMILY 71 PROTEIN"/>
    <property type="match status" value="1"/>
</dbReference>
<dbReference type="PANTHER" id="PTHR47955:SF14">
    <property type="entry name" value="OS01G0543600 PROTEIN"/>
    <property type="match status" value="1"/>
</dbReference>
<dbReference type="Pfam" id="PF00067">
    <property type="entry name" value="p450"/>
    <property type="match status" value="1"/>
</dbReference>
<dbReference type="PRINTS" id="PR00463">
    <property type="entry name" value="EP450I"/>
</dbReference>
<dbReference type="PRINTS" id="PR00385">
    <property type="entry name" value="P450"/>
</dbReference>
<dbReference type="SUPFAM" id="SSF48264">
    <property type="entry name" value="Cytochrome P450"/>
    <property type="match status" value="1"/>
</dbReference>
<dbReference type="PROSITE" id="PS00086">
    <property type="entry name" value="CYTOCHROME_P450"/>
    <property type="match status" value="1"/>
</dbReference>
<keyword id="KW-0349">Heme</keyword>
<keyword id="KW-0408">Iron</keyword>
<keyword id="KW-0472">Membrane</keyword>
<keyword id="KW-0479">Metal-binding</keyword>
<keyword id="KW-0503">Monooxygenase</keyword>
<keyword id="KW-0520">NAD</keyword>
<keyword id="KW-0560">Oxidoreductase</keyword>
<keyword id="KW-1185">Reference proteome</keyword>
<keyword id="KW-0812">Transmembrane</keyword>
<keyword id="KW-1133">Transmembrane helix</keyword>